<dbReference type="EMBL" id="BA000028">
    <property type="protein sequence ID" value="BAC12590.1"/>
    <property type="molecule type" value="Genomic_DNA"/>
</dbReference>
<dbReference type="RefSeq" id="WP_011065039.1">
    <property type="nucleotide sequence ID" value="NC_004193.1"/>
</dbReference>
<dbReference type="SMR" id="Q8ESK0"/>
<dbReference type="STRING" id="221109.gene:10732838"/>
<dbReference type="KEGG" id="oih:OB0634"/>
<dbReference type="eggNOG" id="COG3091">
    <property type="taxonomic scope" value="Bacteria"/>
</dbReference>
<dbReference type="HOGENOM" id="CLU_123820_0_0_9"/>
<dbReference type="OrthoDB" id="9799909at2"/>
<dbReference type="PhylomeDB" id="Q8ESK0"/>
<dbReference type="Proteomes" id="UP000000822">
    <property type="component" value="Chromosome"/>
</dbReference>
<dbReference type="GO" id="GO:0005737">
    <property type="term" value="C:cytoplasm"/>
    <property type="evidence" value="ECO:0007669"/>
    <property type="project" value="UniProtKB-SubCell"/>
</dbReference>
<dbReference type="GO" id="GO:0008270">
    <property type="term" value="F:zinc ion binding"/>
    <property type="evidence" value="ECO:0007669"/>
    <property type="project" value="UniProtKB-UniRule"/>
</dbReference>
<dbReference type="GO" id="GO:0006950">
    <property type="term" value="P:response to stress"/>
    <property type="evidence" value="ECO:0007669"/>
    <property type="project" value="UniProtKB-ARBA"/>
</dbReference>
<dbReference type="HAMAP" id="MF_00745">
    <property type="entry name" value="SprT_like"/>
    <property type="match status" value="1"/>
</dbReference>
<dbReference type="InterPro" id="IPR006640">
    <property type="entry name" value="SprT-like_domain"/>
</dbReference>
<dbReference type="InterPro" id="IPR023524">
    <property type="entry name" value="Uncharacterised_SprT-like"/>
</dbReference>
<dbReference type="NCBIfam" id="NF003339">
    <property type="entry name" value="PRK04351.1"/>
    <property type="match status" value="1"/>
</dbReference>
<dbReference type="Pfam" id="PF10263">
    <property type="entry name" value="SprT-like"/>
    <property type="match status" value="1"/>
</dbReference>
<dbReference type="SMART" id="SM00731">
    <property type="entry name" value="SprT"/>
    <property type="match status" value="1"/>
</dbReference>
<keyword id="KW-0963">Cytoplasm</keyword>
<keyword id="KW-0479">Metal-binding</keyword>
<keyword id="KW-1185">Reference proteome</keyword>
<keyword id="KW-0862">Zinc</keyword>
<sequence>MKLPSDIELFELVDKLSLTYFNKHFIDKVYFNTRLRTTGGRYLPSKRVIELNPKYVLESNKEEFYGIIKHELCHYHLHIEGKGYKHGDRDFKELLKATGSPRHCSPLPSQQREYRYKYQCIQCGFVYKRVRKVNMRKYRCGKCRGSLKEI</sequence>
<comment type="cofactor">
    <cofactor evidence="1">
        <name>Zn(2+)</name>
        <dbReference type="ChEBI" id="CHEBI:29105"/>
    </cofactor>
    <text evidence="1">Binds 1 zinc ion.</text>
</comment>
<comment type="subcellular location">
    <subcellularLocation>
        <location evidence="1">Cytoplasm</location>
    </subcellularLocation>
</comment>
<comment type="similarity">
    <text evidence="1">Belongs to the SprT family.</text>
</comment>
<accession>Q8ESK0</accession>
<protein>
    <recommendedName>
        <fullName evidence="1">Protein SprT-like</fullName>
    </recommendedName>
</protein>
<feature type="chain" id="PRO_0000213295" description="Protein SprT-like">
    <location>
        <begin position="1"/>
        <end position="150"/>
    </location>
</feature>
<feature type="domain" description="SprT-like" evidence="1">
    <location>
        <begin position="11"/>
        <end position="149"/>
    </location>
</feature>
<feature type="active site" evidence="1">
    <location>
        <position position="71"/>
    </location>
</feature>
<feature type="binding site" evidence="1">
    <location>
        <position position="70"/>
    </location>
    <ligand>
        <name>Zn(2+)</name>
        <dbReference type="ChEBI" id="CHEBI:29105"/>
    </ligand>
</feature>
<feature type="binding site" evidence="1">
    <location>
        <position position="74"/>
    </location>
    <ligand>
        <name>Zn(2+)</name>
        <dbReference type="ChEBI" id="CHEBI:29105"/>
    </ligand>
</feature>
<name>SPRTL_OCEIH</name>
<evidence type="ECO:0000255" key="1">
    <source>
        <dbReference type="HAMAP-Rule" id="MF_00745"/>
    </source>
</evidence>
<proteinExistence type="inferred from homology"/>
<organism>
    <name type="scientific">Oceanobacillus iheyensis (strain DSM 14371 / CIP 107618 / JCM 11309 / KCTC 3954 / HTE831)</name>
    <dbReference type="NCBI Taxonomy" id="221109"/>
    <lineage>
        <taxon>Bacteria</taxon>
        <taxon>Bacillati</taxon>
        <taxon>Bacillota</taxon>
        <taxon>Bacilli</taxon>
        <taxon>Bacillales</taxon>
        <taxon>Bacillaceae</taxon>
        <taxon>Oceanobacillus</taxon>
    </lineage>
</organism>
<reference key="1">
    <citation type="journal article" date="2002" name="Nucleic Acids Res.">
        <title>Genome sequence of Oceanobacillus iheyensis isolated from the Iheya Ridge and its unexpected adaptive capabilities to extreme environments.</title>
        <authorList>
            <person name="Takami H."/>
            <person name="Takaki Y."/>
            <person name="Uchiyama I."/>
        </authorList>
    </citation>
    <scope>NUCLEOTIDE SEQUENCE [LARGE SCALE GENOMIC DNA]</scope>
    <source>
        <strain>DSM 14371 / CIP 107618 / JCM 11309 / KCTC 3954 / HTE831</strain>
    </source>
</reference>
<gene>
    <name type="ordered locus">OB0634</name>
</gene>